<dbReference type="EC" id="4.2.1.1" evidence="6"/>
<dbReference type="EMBL" id="BA000019">
    <property type="protein sequence ID" value="BAB72822.1"/>
    <property type="molecule type" value="Genomic_DNA"/>
</dbReference>
<dbReference type="PIR" id="AG1914">
    <property type="entry name" value="AG1914"/>
</dbReference>
<dbReference type="RefSeq" id="WP_010995039.1">
    <property type="nucleotide sequence ID" value="NZ_RSCN01000006.1"/>
</dbReference>
<dbReference type="SMR" id="Q8YYI3"/>
<dbReference type="STRING" id="103690.gene:10492878"/>
<dbReference type="KEGG" id="ana:all0865"/>
<dbReference type="eggNOG" id="COG0663">
    <property type="taxonomic scope" value="Bacteria"/>
</dbReference>
<dbReference type="eggNOG" id="COG4451">
    <property type="taxonomic scope" value="Bacteria"/>
</dbReference>
<dbReference type="OrthoDB" id="9803036at2"/>
<dbReference type="Proteomes" id="UP000002483">
    <property type="component" value="Chromosome"/>
</dbReference>
<dbReference type="GO" id="GO:0031470">
    <property type="term" value="C:carboxysome"/>
    <property type="evidence" value="ECO:0000314"/>
    <property type="project" value="UniProtKB"/>
</dbReference>
<dbReference type="GO" id="GO:0005737">
    <property type="term" value="C:cytoplasm"/>
    <property type="evidence" value="ECO:0007669"/>
    <property type="project" value="UniProtKB-SubCell"/>
</dbReference>
<dbReference type="GO" id="GO:0004089">
    <property type="term" value="F:carbonate dehydratase activity"/>
    <property type="evidence" value="ECO:0000314"/>
    <property type="project" value="UniProtKB"/>
</dbReference>
<dbReference type="GO" id="GO:0046872">
    <property type="term" value="F:metal ion binding"/>
    <property type="evidence" value="ECO:0007669"/>
    <property type="project" value="UniProtKB-KW"/>
</dbReference>
<dbReference type="GO" id="GO:0043886">
    <property type="term" value="F:structural constituent of carboxysome shell"/>
    <property type="evidence" value="ECO:0000314"/>
    <property type="project" value="UniProtKB"/>
</dbReference>
<dbReference type="GO" id="GO:0015977">
    <property type="term" value="P:carbon fixation"/>
    <property type="evidence" value="ECO:0007669"/>
    <property type="project" value="UniProtKB-KW"/>
</dbReference>
<dbReference type="GO" id="GO:0015979">
    <property type="term" value="P:photosynthesis"/>
    <property type="evidence" value="ECO:0007669"/>
    <property type="project" value="UniProtKB-KW"/>
</dbReference>
<dbReference type="CDD" id="cd00710">
    <property type="entry name" value="LbH_gamma_CA"/>
    <property type="match status" value="1"/>
</dbReference>
<dbReference type="CDD" id="cd00307">
    <property type="entry name" value="RuBisCO_small_like"/>
    <property type="match status" value="3"/>
</dbReference>
<dbReference type="Gene3D" id="2.160.10.10">
    <property type="entry name" value="Hexapeptide repeat proteins"/>
    <property type="match status" value="1"/>
</dbReference>
<dbReference type="Gene3D" id="3.30.190.10">
    <property type="entry name" value="Ribulose bisphosphate carboxylase, small subunit"/>
    <property type="match status" value="3"/>
</dbReference>
<dbReference type="InterPro" id="IPR047223">
    <property type="entry name" value="CA_gamma_LbH"/>
</dbReference>
<dbReference type="InterPro" id="IPR017156">
    <property type="entry name" value="CcmM"/>
</dbReference>
<dbReference type="InterPro" id="IPR052265">
    <property type="entry name" value="Gamma-CA"/>
</dbReference>
<dbReference type="InterPro" id="IPR001451">
    <property type="entry name" value="Hexapep"/>
</dbReference>
<dbReference type="InterPro" id="IPR000894">
    <property type="entry name" value="RuBisCO_ssu_dom"/>
</dbReference>
<dbReference type="InterPro" id="IPR036385">
    <property type="entry name" value="RuBisCO_ssu_sf"/>
</dbReference>
<dbReference type="InterPro" id="IPR011004">
    <property type="entry name" value="Trimer_LpxA-like_sf"/>
</dbReference>
<dbReference type="PANTHER" id="PTHR43360">
    <property type="entry name" value="CARBON DIOXIDE CONCENTRATING MECHANISM PROTEIN CCMM"/>
    <property type="match status" value="1"/>
</dbReference>
<dbReference type="PANTHER" id="PTHR43360:SF1">
    <property type="entry name" value="CARBOXYSOME ASSEMBLY PROTEIN CCMM"/>
    <property type="match status" value="1"/>
</dbReference>
<dbReference type="Pfam" id="PF00132">
    <property type="entry name" value="Hexapep"/>
    <property type="match status" value="1"/>
</dbReference>
<dbReference type="Pfam" id="PF00101">
    <property type="entry name" value="RuBisCO_small"/>
    <property type="match status" value="3"/>
</dbReference>
<dbReference type="PIRSF" id="PIRSF037250">
    <property type="entry name" value="CcmM"/>
    <property type="match status" value="1"/>
</dbReference>
<dbReference type="SMART" id="SM00961">
    <property type="entry name" value="RuBisCO_small"/>
    <property type="match status" value="3"/>
</dbReference>
<dbReference type="SUPFAM" id="SSF55239">
    <property type="entry name" value="RuBisCO, small subunit"/>
    <property type="match status" value="3"/>
</dbReference>
<dbReference type="SUPFAM" id="SSF51161">
    <property type="entry name" value="Trimeric LpxA-like enzymes"/>
    <property type="match status" value="1"/>
</dbReference>
<keyword id="KW-0024">Alternative initiation</keyword>
<keyword id="KW-1283">Bacterial microcompartment</keyword>
<keyword id="KW-0120">Carbon dioxide fixation</keyword>
<keyword id="KW-1282">Carboxysome</keyword>
<keyword id="KW-0963">Cytoplasm</keyword>
<keyword id="KW-0903">Direct protein sequencing</keyword>
<keyword id="KW-1015">Disulfide bond</keyword>
<keyword id="KW-0456">Lyase</keyword>
<keyword id="KW-0479">Metal-binding</keyword>
<keyword id="KW-0602">Photosynthesis</keyword>
<keyword id="KW-1185">Reference proteome</keyword>
<keyword id="KW-0677">Repeat</keyword>
<keyword id="KW-0862">Zinc</keyword>
<reference key="1">
    <citation type="journal article" date="2001" name="DNA Res.">
        <title>Complete genomic sequence of the filamentous nitrogen-fixing cyanobacterium Anabaena sp. strain PCC 7120.</title>
        <authorList>
            <person name="Kaneko T."/>
            <person name="Nakamura Y."/>
            <person name="Wolk C.P."/>
            <person name="Kuritz T."/>
            <person name="Sasamoto S."/>
            <person name="Watanabe A."/>
            <person name="Iriguchi M."/>
            <person name="Ishikawa A."/>
            <person name="Kawashima K."/>
            <person name="Kimura T."/>
            <person name="Kishida Y."/>
            <person name="Kohara M."/>
            <person name="Matsumoto M."/>
            <person name="Matsuno A."/>
            <person name="Muraki A."/>
            <person name="Nakazaki N."/>
            <person name="Shimpo S."/>
            <person name="Sugimoto M."/>
            <person name="Takazawa M."/>
            <person name="Yamada M."/>
            <person name="Yasuda M."/>
            <person name="Tabata S."/>
        </authorList>
    </citation>
    <scope>NUCLEOTIDE SEQUENCE [LARGE SCALE GENOMIC DNA]</scope>
    <source>
        <strain>PCC 7120 / SAG 25.82 / UTEX 2576</strain>
    </source>
</reference>
<reference key="2">
    <citation type="journal article" date="2007" name="J. Biol. Chem.">
        <title>Analysis of carboxysomes from Synechococcus PCC7942 reveals multiple Rubisco complexes with carboxysomal proteins CcmM and CcaA.</title>
        <authorList>
            <person name="Long B.M."/>
            <person name="Badger M.R."/>
            <person name="Whitney S.M."/>
            <person name="Price G.D."/>
        </authorList>
    </citation>
    <scope>PROTEIN SEQUENCE OF 227-233</scope>
    <scope>2 PROTEIN FORMS</scope>
    <scope>ISOFORM CCMM35</scope>
    <source>
        <strain>PCC 7120 / SAG 25.82 / UTEX 2576</strain>
    </source>
</reference>
<reference key="3">
    <citation type="journal article" date="2014" name="Photosyn. Res.">
        <title>Identification and characterization of a carboxysomal gamma-carbonic anhydrase from the cyanobacterium Nostoc sp. PCC 7120.</title>
        <authorList>
            <person name="de Araujo C."/>
            <person name="Arefeen D."/>
            <person name="Tadesse Y."/>
            <person name="Long B.M."/>
            <person name="Price G.D."/>
            <person name="Rowlett R.S."/>
            <person name="Kimber M.S."/>
            <person name="Espie G.S."/>
        </authorList>
    </citation>
    <scope>FUNCTION AS A CARBONIC ANHYDRASE</scope>
    <scope>ACTIVITY REGULATION</scope>
    <scope>BIOPHYSICOCHEMICAL PROPERTIES</scope>
    <scope>SUBCELLULAR LOCATION</scope>
    <scope>DOMAIN</scope>
    <scope>2 PROTEIN FORMS</scope>
    <source>
        <strain>PCC 7120 / SAG 25.82 / UTEX 2576</strain>
    </source>
</reference>
<gene>
    <name evidence="7" type="primary">ccmM</name>
    <name type="ordered locus">all0865</name>
</gene>
<evidence type="ECO:0000250" key="1">
    <source>
        <dbReference type="UniProtKB" id="P40881"/>
    </source>
</evidence>
<evidence type="ECO:0000250" key="2">
    <source>
        <dbReference type="UniProtKB" id="Q03513"/>
    </source>
</evidence>
<evidence type="ECO:0000250" key="3">
    <source>
        <dbReference type="UniProtKB" id="Q8DKB5"/>
    </source>
</evidence>
<evidence type="ECO:0000256" key="4">
    <source>
        <dbReference type="SAM" id="MobiDB-lite"/>
    </source>
</evidence>
<evidence type="ECO:0000269" key="5">
    <source>
    </source>
</evidence>
<evidence type="ECO:0000269" key="6">
    <source>
    </source>
</evidence>
<evidence type="ECO:0000303" key="7">
    <source>
    </source>
</evidence>
<evidence type="ECO:0000303" key="8">
    <source>
    </source>
</evidence>
<evidence type="ECO:0000305" key="9"/>
<evidence type="ECO:0000305" key="10">
    <source>
    </source>
</evidence>
<evidence type="ECO:0000305" key="11">
    <source>
    </source>
</evidence>
<name>CCMM_NOSS1</name>
<accession>Q8YYI3</accession>
<organism>
    <name type="scientific">Nostoc sp. (strain PCC 7120 / SAG 25.82 / UTEX 2576)</name>
    <dbReference type="NCBI Taxonomy" id="103690"/>
    <lineage>
        <taxon>Bacteria</taxon>
        <taxon>Bacillati</taxon>
        <taxon>Cyanobacteriota</taxon>
        <taxon>Cyanophyceae</taxon>
        <taxon>Nostocales</taxon>
        <taxon>Nostocaceae</taxon>
        <taxon>Nostoc</taxon>
    </lineage>
</organism>
<sequence length="555" mass="59465">MAVRSTAAPPTPWSRSLAEAQIHESAFVHPFSNIIGDVHIGANVIIAPGTSIRADEGTPFHIGENTNIQDGVVIHGLEQGRVVGDDNKEYSVWVGSSASLTHMALIHGPAYVGDNSFIGFRSTVFNAKVGAGCIVMMHALIKDVEVPPGKYVPSGAIITNQKQADRLPDVQPQDRDFAHHVIGINQALRAGYLCAADSKCIAPLRNDQVKSYTSTTVIGLERSSEVASNSLGAETIEQVRYLLEQGYKIGSEHVDQRRFRTGSWTSCQPIEARSVGDALAALEACLADHSGEYVRLFGIDPKGKRRVLETIIQRPDGVVAGSTSFKAPASNTNGNGSYHSNGNGNGYSNGATSGKVSAETVDQIRQLLAGGYKIGTEHVDERRFRTGSWNSCKPIEATSAGEVVAALEECIDSHQGEYIRLIGIDPKAKRRVLESIIQRPNGQVAPSSSPRTVVSASSASSGTATATATRLSTEVVDQVRQILGGGYKLSIEHVDQRRFRTGSWSSTGAISATSEREAIAVIEASLSEFAGEYVRLIGIDPKAKRRVLETIIQRP</sequence>
<comment type="function">
    <text evidence="2 6">Functions as a scaffold protein for the assembly of beta-carboxysomes, initiates carboxysome assembly by coalescing RuBisCO (ribulose bisphosphate carboxylase, rbcL-rbcS) (By similarity). Produced as a full-length (M58) and a short form (M35), possibly by alternative translation initiation; probably both forms are required for correct carboxysome assembly and growth. In this strain both forms are equally abundant (PubMed:24907906).</text>
</comment>
<comment type="function">
    <text evidence="6">A moderately active carbonic anhydrase that catalyzes the reversible hydration of carbon dioxide. Essential to photosynthetic carbon dioxide fixation, supplies CO(2) to ribulose bisphosphate carboxylase (RuBisCO) in the carboxysome. Also hydrolyzes COS.</text>
</comment>
<comment type="function">
    <text evidence="2">Beta-carboxysome assembly initiates when soluble RuBisCO is condensed into a liquid matrix in a pre-carboxysome by the RbcS-like domains of probably both forms of CcmM. CcmN interacts with the N-terminus of full length CcmM, and then recruits the shell proteins (CcmK) via CcmN's encapsulation peptide. Shell formation requires both CcmK proteins and CcmO. CcmL caps the otherwise elongated carboxysome. Once fully encapsulated carboxysomes are formed, they migrate within the cell probably via interactions with the cytoskeleton.</text>
</comment>
<comment type="catalytic activity">
    <reaction evidence="6">
        <text>hydrogencarbonate + H(+) = CO2 + H2O</text>
        <dbReference type="Rhea" id="RHEA:10748"/>
        <dbReference type="ChEBI" id="CHEBI:15377"/>
        <dbReference type="ChEBI" id="CHEBI:15378"/>
        <dbReference type="ChEBI" id="CHEBI:16526"/>
        <dbReference type="ChEBI" id="CHEBI:17544"/>
        <dbReference type="EC" id="4.2.1.1"/>
    </reaction>
</comment>
<comment type="cofactor">
    <cofactor evidence="3">
        <name>Zn(2+)</name>
        <dbReference type="ChEBI" id="CHEBI:29105"/>
    </cofactor>
    <text evidence="3">Binds 3 zinc per trimer.</text>
</comment>
<comment type="activity regulation">
    <text evidence="6">Carbonic anhydrase (CA) activity is probably under redox control to remain inactive in the cytoplasm. Carbonic anhydrase (CA) activity of full-length protein and N-terminal fragment is inhibited by ethoxyzolamide. N-terminal fragment CA activity is activated under oxidizing conditions and inhibited under reducing conditions.</text>
</comment>
<comment type="biophysicochemical properties">
    <kinetics>
        <KM evidence="6">10.2 mM for CO(2) at pH 7.5, 25 degrees Celsius, for N-terminal 209 residue fragment</KM>
        <KM evidence="6">5.2 mM for CO(2) at pH 8.0, 25 degrees Celsius, N-terminal 209 residue fragment</KM>
        <text evidence="6">kcat at pH 7.5 is 19000 sec(-1), at pH 8.0 is 22000 sec(-1).</text>
    </kinetics>
    <phDependence>
        <text evidence="6">Optimum pH is 8.0 - 9.5.</text>
    </phDependence>
    <temperatureDependence>
        <text evidence="6">Optimum temperature is 25-35 degrees Celsius for N-terminal 209 residue fragment.</text>
    </temperatureDependence>
</comment>
<comment type="subunit">
    <text evidence="2 3">Probable homotrimer; zinc is bound between adjacent monomers (By similarity). Full length protein (M58) interacts with CcmN. The C-terminal RbcS-like domains (SSUL) bind to holo-RuBisCO, as does the M35 short form (By similarity).</text>
</comment>
<comment type="subcellular location">
    <subcellularLocation>
        <location evidence="6">Carboxysome</location>
    </subcellularLocation>
    <subcellularLocation>
        <location evidence="11">Cytoplasm</location>
    </subcellularLocation>
    <text evidence="6">This cyanobacterium makes beta-type carboxysomes. Both isoforms are found equally distributed in the interior of the carboxysome. An unexpectedly large amount is found outside the carboxysome by immungold labelling, this might represent coalescing RuBisCO-CcmM.</text>
</comment>
<comment type="alternative products">
    <event type="alternative initiation"/>
    <isoform>
        <id>Q8YYI3-1</id>
        <name>CcmM58</name>
        <sequence type="displayed"/>
    </isoform>
    <isoform>
        <id>Q8YYI3-2</id>
        <name evidence="5">CcmM35</name>
        <sequence type="described" ref="VSP_060775 VSP_060776"/>
    </isoform>
</comment>
<comment type="domain">
    <text evidence="2 6">The N-terminus (residues 1-209) has carbonic anhydrase (CA) activity (PubMed:24907906). The C-terminus has 3 repeats that are similar to the small subunit of RuBisCO (rbcS), called SSUL. The SSUL are connected by flexible linkers. The N-terminal domain probably forms a scaffold on which CcmN and maybe other carboxysomal proteins assemble, while the C-terminus binds and coalesces RuBisCO (By similarity).</text>
</comment>
<comment type="PTM">
    <text evidence="5 6 11">The first amino acid of the short form (equivalent to Val-226) is not seen in Edman degradation, while Ser-230 may be post-translationally modified (PubMed:17675289). Migrates in gels as 2 about equal forms of about 60 and 35 kDa (called M58 and M35) (PubMed:24907906). They are probably the result of alternative translation initiation (Probable).</text>
</comment>
<comment type="similarity">
    <text evidence="9">Belongs to the gamma-class carbonic anhydrase family.</text>
</comment>
<protein>
    <recommendedName>
        <fullName evidence="9">Carboxysome assembly protein CcmM</fullName>
        <shortName evidence="7">CcmM58</shortName>
        <shortName evidence="7">M58</shortName>
    </recommendedName>
    <alternativeName>
        <fullName>Carbon dioxide concentrating mechanism protein CcmM</fullName>
    </alternativeName>
    <alternativeName>
        <fullName evidence="8">Carbonic anhydrase</fullName>
        <ecNumber evidence="6">4.2.1.1</ecNumber>
    </alternativeName>
</protein>
<feature type="chain" id="PRO_0000451243" description="Carboxysome assembly protein CcmM">
    <location>
        <begin position="1"/>
        <end position="555"/>
    </location>
</feature>
<feature type="region of interest" description="Has carbonic anhydrase (CA) activity" evidence="6">
    <location>
        <begin position="1"/>
        <end position="209"/>
    </location>
</feature>
<feature type="region of interest" description="RbcS-like repeat 1, SSUL1" evidence="9">
    <location>
        <begin position="223"/>
        <end position="315"/>
    </location>
</feature>
<feature type="region of interest" description="Disordered" evidence="4">
    <location>
        <begin position="323"/>
        <end position="351"/>
    </location>
</feature>
<feature type="region of interest" description="RbcS-like repeat 2, SSUL2" evidence="9">
    <location>
        <begin position="347"/>
        <end position="440"/>
    </location>
</feature>
<feature type="region of interest" description="Disordered" evidence="4">
    <location>
        <begin position="441"/>
        <end position="464"/>
    </location>
</feature>
<feature type="region of interest" description="RbcS-like repeat 3, SSUL3" evidence="9">
    <location>
        <begin position="460"/>
        <end position="555"/>
    </location>
</feature>
<feature type="compositionally biased region" description="Low complexity" evidence="4">
    <location>
        <begin position="330"/>
        <end position="351"/>
    </location>
</feature>
<feature type="compositionally biased region" description="Low complexity" evidence="4">
    <location>
        <begin position="445"/>
        <end position="464"/>
    </location>
</feature>
<feature type="active site" description="Proton donor/acceptor" evidence="1">
    <location>
        <position position="56"/>
    </location>
</feature>
<feature type="binding site" description="in other chain" evidence="3">
    <location>
        <position position="75"/>
    </location>
    <ligand>
        <name>Zn(2+)</name>
        <dbReference type="ChEBI" id="CHEBI:29105"/>
        <note>ligand shared between two neighboring subunits</note>
    </ligand>
</feature>
<feature type="binding site" evidence="3">
    <location>
        <position position="102"/>
    </location>
    <ligand>
        <name>Zn(2+)</name>
        <dbReference type="ChEBI" id="CHEBI:29105"/>
        <note>ligand shared between two neighboring subunits</note>
    </ligand>
</feature>
<feature type="binding site" description="in other chain" evidence="3">
    <location>
        <position position="107"/>
    </location>
    <ligand>
        <name>Zn(2+)</name>
        <dbReference type="ChEBI" id="CHEBI:29105"/>
        <note>ligand shared between two neighboring subunits</note>
    </ligand>
</feature>
<feature type="disulfide bond" evidence="3 11">
    <location>
        <begin position="194"/>
        <end position="200"/>
    </location>
</feature>
<feature type="splice variant" id="VSP_060775" description="In isoform CcmM35." evidence="5">
    <location>
        <begin position="1"/>
        <end position="225"/>
    </location>
</feature>
<feature type="splice variant" id="VSP_060776" description="In isoform CcmM35." evidence="10">
    <original>V</original>
    <variation>M</variation>
    <location>
        <position position="226"/>
    </location>
</feature>
<proteinExistence type="evidence at protein level"/>